<protein>
    <recommendedName>
        <fullName evidence="1">Large ribosomal subunit protein bL28</fullName>
    </recommendedName>
    <alternativeName>
        <fullName evidence="2">50S ribosomal protein L28</fullName>
    </alternativeName>
</protein>
<proteinExistence type="inferred from homology"/>
<dbReference type="EMBL" id="CP001357">
    <property type="protein sequence ID" value="ACN83701.1"/>
    <property type="molecule type" value="Genomic_DNA"/>
</dbReference>
<dbReference type="RefSeq" id="WP_008727936.1">
    <property type="nucleotide sequence ID" value="NC_012225.1"/>
</dbReference>
<dbReference type="SMR" id="C0R0R3"/>
<dbReference type="STRING" id="565034.BHWA1_01222"/>
<dbReference type="GeneID" id="63962323"/>
<dbReference type="KEGG" id="bhy:BHWA1_01222"/>
<dbReference type="eggNOG" id="COG0227">
    <property type="taxonomic scope" value="Bacteria"/>
</dbReference>
<dbReference type="HOGENOM" id="CLU_064548_7_0_12"/>
<dbReference type="Proteomes" id="UP000001803">
    <property type="component" value="Chromosome"/>
</dbReference>
<dbReference type="GO" id="GO:1990904">
    <property type="term" value="C:ribonucleoprotein complex"/>
    <property type="evidence" value="ECO:0007669"/>
    <property type="project" value="UniProtKB-KW"/>
</dbReference>
<dbReference type="GO" id="GO:0005840">
    <property type="term" value="C:ribosome"/>
    <property type="evidence" value="ECO:0007669"/>
    <property type="project" value="UniProtKB-KW"/>
</dbReference>
<dbReference type="GO" id="GO:0003735">
    <property type="term" value="F:structural constituent of ribosome"/>
    <property type="evidence" value="ECO:0007669"/>
    <property type="project" value="InterPro"/>
</dbReference>
<dbReference type="GO" id="GO:0006412">
    <property type="term" value="P:translation"/>
    <property type="evidence" value="ECO:0007669"/>
    <property type="project" value="UniProtKB-UniRule"/>
</dbReference>
<dbReference type="Gene3D" id="2.30.170.40">
    <property type="entry name" value="Ribosomal protein L28/L24"/>
    <property type="match status" value="1"/>
</dbReference>
<dbReference type="HAMAP" id="MF_00373">
    <property type="entry name" value="Ribosomal_bL28"/>
    <property type="match status" value="1"/>
</dbReference>
<dbReference type="InterPro" id="IPR050096">
    <property type="entry name" value="Bacterial_rp_bL28"/>
</dbReference>
<dbReference type="InterPro" id="IPR026569">
    <property type="entry name" value="Ribosomal_bL28"/>
</dbReference>
<dbReference type="InterPro" id="IPR034704">
    <property type="entry name" value="Ribosomal_bL28/bL31-like_sf"/>
</dbReference>
<dbReference type="InterPro" id="IPR001383">
    <property type="entry name" value="Ribosomal_bL28_bact-type"/>
</dbReference>
<dbReference type="InterPro" id="IPR037147">
    <property type="entry name" value="Ribosomal_bL28_sf"/>
</dbReference>
<dbReference type="NCBIfam" id="TIGR00009">
    <property type="entry name" value="L28"/>
    <property type="match status" value="1"/>
</dbReference>
<dbReference type="PANTHER" id="PTHR39080">
    <property type="entry name" value="50S RIBOSOMAL PROTEIN L28"/>
    <property type="match status" value="1"/>
</dbReference>
<dbReference type="PANTHER" id="PTHR39080:SF1">
    <property type="entry name" value="LARGE RIBOSOMAL SUBUNIT PROTEIN BL28A"/>
    <property type="match status" value="1"/>
</dbReference>
<dbReference type="Pfam" id="PF00830">
    <property type="entry name" value="Ribosomal_L28"/>
    <property type="match status" value="1"/>
</dbReference>
<dbReference type="SUPFAM" id="SSF143800">
    <property type="entry name" value="L28p-like"/>
    <property type="match status" value="1"/>
</dbReference>
<name>RL28_BRAHW</name>
<organism>
    <name type="scientific">Brachyspira hyodysenteriae (strain ATCC 49526 / WA1)</name>
    <dbReference type="NCBI Taxonomy" id="565034"/>
    <lineage>
        <taxon>Bacteria</taxon>
        <taxon>Pseudomonadati</taxon>
        <taxon>Spirochaetota</taxon>
        <taxon>Spirochaetia</taxon>
        <taxon>Brachyspirales</taxon>
        <taxon>Brachyspiraceae</taxon>
        <taxon>Brachyspira</taxon>
    </lineage>
</organism>
<evidence type="ECO:0000255" key="1">
    <source>
        <dbReference type="HAMAP-Rule" id="MF_00373"/>
    </source>
</evidence>
<evidence type="ECO:0000305" key="2"/>
<comment type="similarity">
    <text evidence="1">Belongs to the bacterial ribosomal protein bL28 family.</text>
</comment>
<keyword id="KW-0687">Ribonucleoprotein</keyword>
<keyword id="KW-0689">Ribosomal protein</keyword>
<sequence>MARVCEICGKGKQNGHSVSHSNIKTKRSFNANLQNVKIEVNGSVKKALVCTKCIKGNKISKAK</sequence>
<feature type="chain" id="PRO_1000195906" description="Large ribosomal subunit protein bL28">
    <location>
        <begin position="1"/>
        <end position="63"/>
    </location>
</feature>
<gene>
    <name evidence="1" type="primary">rpmB</name>
    <name type="ordered locus">BHWA1_01222</name>
</gene>
<accession>C0R0R3</accession>
<reference key="1">
    <citation type="journal article" date="2009" name="PLoS ONE">
        <title>Genome sequence of the pathogenic intestinal spirochete Brachyspira hyodysenteriae reveals adaptations to its lifestyle in the porcine large intestine.</title>
        <authorList>
            <person name="Bellgard M.I."/>
            <person name="Wanchanthuek P."/>
            <person name="La T."/>
            <person name="Ryan K."/>
            <person name="Moolhuijzen P."/>
            <person name="Albertyn Z."/>
            <person name="Shaban B."/>
            <person name="Motro Y."/>
            <person name="Dunn D.S."/>
            <person name="Schibeci D."/>
            <person name="Hunter A."/>
            <person name="Barrero R."/>
            <person name="Phillips N.D."/>
            <person name="Hampson D.J."/>
        </authorList>
    </citation>
    <scope>NUCLEOTIDE SEQUENCE [LARGE SCALE GENOMIC DNA]</scope>
    <source>
        <strain>ATCC 49526 / WA1</strain>
    </source>
</reference>